<gene>
    <name evidence="1" type="primary">rpsS</name>
    <name type="ordered locus">CRP_152</name>
</gene>
<comment type="function">
    <text evidence="1">Protein S19 forms a complex with S13 that binds strongly to the 16S ribosomal RNA.</text>
</comment>
<comment type="similarity">
    <text evidence="1">Belongs to the universal ribosomal protein uS19 family.</text>
</comment>
<protein>
    <recommendedName>
        <fullName evidence="1">Small ribosomal subunit protein uS19</fullName>
    </recommendedName>
    <alternativeName>
        <fullName evidence="2">30S ribosomal protein S19</fullName>
    </alternativeName>
</protein>
<sequence>MSRSIKKGVFLHKSLFLKIKNNKLENIKTWSRNSTIIPDMIGININIHNGKLFKKVFIVEDMIGCKLGEFSFTRKFKSHSKKIKRKKK</sequence>
<proteinExistence type="inferred from homology"/>
<accession>Q05FI8</accession>
<reference key="1">
    <citation type="journal article" date="2006" name="Science">
        <title>The 160-kilobase genome of the bacterial endosymbiont Carsonella.</title>
        <authorList>
            <person name="Nakabachi A."/>
            <person name="Yamashita A."/>
            <person name="Toh H."/>
            <person name="Ishikawa H."/>
            <person name="Dunbar H.E."/>
            <person name="Moran N.A."/>
            <person name="Hattori M."/>
        </authorList>
    </citation>
    <scope>NUCLEOTIDE SEQUENCE [LARGE SCALE GENOMIC DNA]</scope>
    <source>
        <strain>PV</strain>
    </source>
</reference>
<organism>
    <name type="scientific">Carsonella ruddii (strain PV)</name>
    <dbReference type="NCBI Taxonomy" id="387662"/>
    <lineage>
        <taxon>Bacteria</taxon>
        <taxon>Pseudomonadati</taxon>
        <taxon>Pseudomonadota</taxon>
        <taxon>Gammaproteobacteria</taxon>
        <taxon>Oceanospirillales</taxon>
        <taxon>Halomonadaceae</taxon>
        <taxon>Zymobacter group</taxon>
        <taxon>Candidatus Carsonella</taxon>
    </lineage>
</organism>
<dbReference type="EMBL" id="AP009180">
    <property type="protein sequence ID" value="BAF35183.1"/>
    <property type="molecule type" value="Genomic_DNA"/>
</dbReference>
<dbReference type="RefSeq" id="WP_011672375.1">
    <property type="nucleotide sequence ID" value="NC_008512.1"/>
</dbReference>
<dbReference type="SMR" id="Q05FI8"/>
<dbReference type="STRING" id="387662.CRP_152"/>
<dbReference type="KEGG" id="crp:CRP_152"/>
<dbReference type="HOGENOM" id="CLU_144911_0_1_6"/>
<dbReference type="Proteomes" id="UP000000777">
    <property type="component" value="Chromosome"/>
</dbReference>
<dbReference type="GO" id="GO:0005737">
    <property type="term" value="C:cytoplasm"/>
    <property type="evidence" value="ECO:0007669"/>
    <property type="project" value="UniProtKB-ARBA"/>
</dbReference>
<dbReference type="GO" id="GO:0015935">
    <property type="term" value="C:small ribosomal subunit"/>
    <property type="evidence" value="ECO:0007669"/>
    <property type="project" value="InterPro"/>
</dbReference>
<dbReference type="GO" id="GO:0019843">
    <property type="term" value="F:rRNA binding"/>
    <property type="evidence" value="ECO:0007669"/>
    <property type="project" value="UniProtKB-UniRule"/>
</dbReference>
<dbReference type="GO" id="GO:0003735">
    <property type="term" value="F:structural constituent of ribosome"/>
    <property type="evidence" value="ECO:0007669"/>
    <property type="project" value="InterPro"/>
</dbReference>
<dbReference type="GO" id="GO:0000028">
    <property type="term" value="P:ribosomal small subunit assembly"/>
    <property type="evidence" value="ECO:0007669"/>
    <property type="project" value="TreeGrafter"/>
</dbReference>
<dbReference type="GO" id="GO:0006412">
    <property type="term" value="P:translation"/>
    <property type="evidence" value="ECO:0007669"/>
    <property type="project" value="UniProtKB-UniRule"/>
</dbReference>
<dbReference type="FunFam" id="3.30.860.10:FF:000001">
    <property type="entry name" value="30S ribosomal protein S19"/>
    <property type="match status" value="1"/>
</dbReference>
<dbReference type="Gene3D" id="3.30.860.10">
    <property type="entry name" value="30s Ribosomal Protein S19, Chain A"/>
    <property type="match status" value="1"/>
</dbReference>
<dbReference type="HAMAP" id="MF_00531">
    <property type="entry name" value="Ribosomal_uS19"/>
    <property type="match status" value="1"/>
</dbReference>
<dbReference type="InterPro" id="IPR002222">
    <property type="entry name" value="Ribosomal_uS19"/>
</dbReference>
<dbReference type="InterPro" id="IPR005732">
    <property type="entry name" value="Ribosomal_uS19_bac-type"/>
</dbReference>
<dbReference type="InterPro" id="IPR020934">
    <property type="entry name" value="Ribosomal_uS19_CS"/>
</dbReference>
<dbReference type="InterPro" id="IPR023575">
    <property type="entry name" value="Ribosomal_uS19_SF"/>
</dbReference>
<dbReference type="NCBIfam" id="TIGR01050">
    <property type="entry name" value="rpsS_bact"/>
    <property type="match status" value="1"/>
</dbReference>
<dbReference type="PANTHER" id="PTHR11880">
    <property type="entry name" value="RIBOSOMAL PROTEIN S19P FAMILY MEMBER"/>
    <property type="match status" value="1"/>
</dbReference>
<dbReference type="PANTHER" id="PTHR11880:SF8">
    <property type="entry name" value="SMALL RIBOSOMAL SUBUNIT PROTEIN US19M"/>
    <property type="match status" value="1"/>
</dbReference>
<dbReference type="Pfam" id="PF00203">
    <property type="entry name" value="Ribosomal_S19"/>
    <property type="match status" value="1"/>
</dbReference>
<dbReference type="PIRSF" id="PIRSF002144">
    <property type="entry name" value="Ribosomal_S19"/>
    <property type="match status" value="1"/>
</dbReference>
<dbReference type="PRINTS" id="PR00975">
    <property type="entry name" value="RIBOSOMALS19"/>
</dbReference>
<dbReference type="SUPFAM" id="SSF54570">
    <property type="entry name" value="Ribosomal protein S19"/>
    <property type="match status" value="1"/>
</dbReference>
<dbReference type="PROSITE" id="PS00323">
    <property type="entry name" value="RIBOSOMAL_S19"/>
    <property type="match status" value="1"/>
</dbReference>
<evidence type="ECO:0000255" key="1">
    <source>
        <dbReference type="HAMAP-Rule" id="MF_00531"/>
    </source>
</evidence>
<evidence type="ECO:0000305" key="2"/>
<name>RS19_CARRP</name>
<keyword id="KW-0687">Ribonucleoprotein</keyword>
<keyword id="KW-0689">Ribosomal protein</keyword>
<keyword id="KW-0694">RNA-binding</keyword>
<keyword id="KW-0699">rRNA-binding</keyword>
<feature type="chain" id="PRO_0000354286" description="Small ribosomal subunit protein uS19">
    <location>
        <begin position="1"/>
        <end position="88"/>
    </location>
</feature>